<protein>
    <recommendedName>
        <fullName evidence="7">Cholesterol 7-desaturase</fullName>
        <ecNumber evidence="3 4 5">1.14.19.21</ecNumber>
    </recommendedName>
    <alternativeName>
        <fullName>Cholesterol desaturase daf-36</fullName>
    </alternativeName>
    <alternativeName>
        <fullName evidence="6">Rieske oxygenase DAF-36/Neverland</fullName>
        <shortName evidence="6">DAF-36/NVD</shortName>
    </alternativeName>
</protein>
<proteinExistence type="evidence at protein level"/>
<feature type="chain" id="PRO_0000421680" description="Cholesterol 7-desaturase">
    <location>
        <begin position="1"/>
        <end position="428"/>
    </location>
</feature>
<feature type="transmembrane region" description="Helical" evidence="1">
    <location>
        <begin position="6"/>
        <end position="26"/>
    </location>
</feature>
<feature type="domain" description="Rieske" evidence="2">
    <location>
        <begin position="81"/>
        <end position="187"/>
    </location>
</feature>
<feature type="binding site" evidence="8">
    <location>
        <position position="122"/>
    </location>
    <ligand>
        <name>[2Fe-2S] cluster</name>
        <dbReference type="ChEBI" id="CHEBI:190135"/>
    </ligand>
</feature>
<feature type="binding site" evidence="2">
    <location>
        <position position="124"/>
    </location>
    <ligand>
        <name>[2Fe-2S] cluster</name>
        <dbReference type="ChEBI" id="CHEBI:190135"/>
    </ligand>
</feature>
<feature type="binding site" evidence="2">
    <location>
        <position position="143"/>
    </location>
    <ligand>
        <name>[2Fe-2S] cluster</name>
        <dbReference type="ChEBI" id="CHEBI:190135"/>
    </ligand>
</feature>
<feature type="binding site" evidence="2">
    <location>
        <position position="146"/>
    </location>
    <ligand>
        <name>[2Fe-2S] cluster</name>
        <dbReference type="ChEBI" id="CHEBI:190135"/>
    </ligand>
</feature>
<feature type="mutagenesis site" description="Abrogates cholesterol dehydrogenase activity." evidence="4">
    <original>C</original>
    <variation>A</variation>
    <location>
        <position position="122"/>
    </location>
</feature>
<feature type="mutagenesis site" description="Abrogates cholesterol dehydrogenase activity." evidence="4">
    <original>D</original>
    <variation>A</variation>
    <location>
        <position position="234"/>
    </location>
</feature>
<keyword id="KW-0001">2Fe-2S</keyword>
<keyword id="KW-0153">Cholesterol metabolism</keyword>
<keyword id="KW-0408">Iron</keyword>
<keyword id="KW-0411">Iron-sulfur</keyword>
<keyword id="KW-0443">Lipid metabolism</keyword>
<keyword id="KW-0472">Membrane</keyword>
<keyword id="KW-0479">Metal-binding</keyword>
<keyword id="KW-0521">NADP</keyword>
<keyword id="KW-0560">Oxidoreductase</keyword>
<keyword id="KW-1185">Reference proteome</keyword>
<keyword id="KW-0753">Steroid metabolism</keyword>
<keyword id="KW-1207">Sterol metabolism</keyword>
<keyword id="KW-0812">Transmembrane</keyword>
<keyword id="KW-1133">Transmembrane helix</keyword>
<name>DAF36_CAEEL</name>
<gene>
    <name type="primary">daf-36</name>
    <name type="ORF">C12D8.5</name>
</gene>
<reference key="1">
    <citation type="journal article" date="1998" name="Science">
        <title>Genome sequence of the nematode C. elegans: a platform for investigating biology.</title>
        <authorList>
            <consortium name="The C. elegans sequencing consortium"/>
        </authorList>
    </citation>
    <scope>NUCLEOTIDE SEQUENCE [LARGE SCALE GENOMIC DNA]</scope>
    <source>
        <strain>Bristol N2</strain>
    </source>
</reference>
<reference key="2">
    <citation type="journal article" date="2006" name="Dev. Cell">
        <title>Hormonal control of C. elegans dauer formation and life span by a Rieske-like oxygenase.</title>
        <authorList>
            <person name="Rottiers V."/>
            <person name="Motola D.L."/>
            <person name="Gerisch B."/>
            <person name="Cummins C.L."/>
            <person name="Nishiwaki K."/>
            <person name="Mangelsdorf D.J."/>
            <person name="Antebi A."/>
        </authorList>
    </citation>
    <scope>FUNCTION</scope>
    <scope>CATALYTIC ACTIVITY</scope>
    <scope>PATHWAY</scope>
    <scope>TISSUE SPECIFICITY</scope>
</reference>
<reference key="3">
    <citation type="journal article" date="2011" name="Aging Cell">
        <title>The Rieske oxygenase DAF-36 functions as a cholesterol 7-desaturase in steroidogenic pathways governing longevity.</title>
        <authorList>
            <person name="Wollam J."/>
            <person name="Magomedova L."/>
            <person name="Magner D.B."/>
            <person name="Shen Y."/>
            <person name="Rottiers V."/>
            <person name="Motola D.L."/>
            <person name="Mangelsdorf D.J."/>
            <person name="Cummins C.L."/>
            <person name="Antebi A."/>
        </authorList>
    </citation>
    <scope>FUNCTION</scope>
    <scope>CATALYTIC ACTIVITY</scope>
    <scope>PATHWAY</scope>
</reference>
<reference key="4">
    <citation type="journal article" date="2011" name="J. Biol. Chem.">
        <title>The conserved Rieske oxygenase DAF-36/Neverland is a novel cholesterol-metabolizing enzyme.</title>
        <authorList>
            <person name="Yoshiyama-Yanagawa T."/>
            <person name="Enya S."/>
            <person name="Shimada-Niwa Y."/>
            <person name="Yaguchi S."/>
            <person name="Haramoto Y."/>
            <person name="Matsuya T."/>
            <person name="Shiomi K."/>
            <person name="Sasakura Y."/>
            <person name="Takahashi S."/>
            <person name="Asashima M."/>
            <person name="Kataoka H."/>
            <person name="Niwa R."/>
        </authorList>
    </citation>
    <scope>FUNCTION</scope>
    <scope>CATALYTIC ACTIVITY</scope>
    <scope>PATHWAY</scope>
    <scope>MUTAGENESIS OF CYS-122 AND ASP-234</scope>
</reference>
<accession>Q17938</accession>
<dbReference type="EC" id="1.14.19.21" evidence="3 4 5"/>
<dbReference type="EMBL" id="Z73969">
    <property type="protein sequence ID" value="CAA98235.2"/>
    <property type="molecule type" value="Genomic_DNA"/>
</dbReference>
<dbReference type="PIR" id="T19219">
    <property type="entry name" value="T19219"/>
</dbReference>
<dbReference type="RefSeq" id="NP_505629.2">
    <property type="nucleotide sequence ID" value="NM_073228.7"/>
</dbReference>
<dbReference type="SMR" id="Q17938"/>
<dbReference type="FunCoup" id="Q17938">
    <property type="interactions" value="116"/>
</dbReference>
<dbReference type="STRING" id="6239.C12D8.5.1"/>
<dbReference type="SwissLipids" id="SLP:000000036"/>
<dbReference type="SwissLipids" id="SLP:000000191"/>
<dbReference type="PaxDb" id="6239-C12D8.5"/>
<dbReference type="PeptideAtlas" id="Q17938"/>
<dbReference type="EnsemblMetazoa" id="C12D8.5.1">
    <property type="protein sequence ID" value="C12D8.5.1"/>
    <property type="gene ID" value="WBGene00007536"/>
</dbReference>
<dbReference type="GeneID" id="179422"/>
<dbReference type="KEGG" id="cel:CELE_C12D8.5"/>
<dbReference type="UCSC" id="C12D8.5">
    <property type="organism name" value="c. elegans"/>
</dbReference>
<dbReference type="AGR" id="WB:WBGene00007536"/>
<dbReference type="CTD" id="179422"/>
<dbReference type="WormBase" id="C12D8.5">
    <property type="protein sequence ID" value="CE34156"/>
    <property type="gene ID" value="WBGene00007536"/>
    <property type="gene designation" value="daf-36"/>
</dbReference>
<dbReference type="eggNOG" id="ENOG502QS20">
    <property type="taxonomic scope" value="Eukaryota"/>
</dbReference>
<dbReference type="GeneTree" id="ENSGT00390000016856"/>
<dbReference type="HOGENOM" id="CLU_037178_0_0_1"/>
<dbReference type="InParanoid" id="Q17938"/>
<dbReference type="OMA" id="AVYQMRR"/>
<dbReference type="OrthoDB" id="426882at2759"/>
<dbReference type="PhylomeDB" id="Q17938"/>
<dbReference type="BioCyc" id="MetaCyc:MONOMER-18486"/>
<dbReference type="BRENDA" id="1.14.19.21">
    <property type="organism ID" value="1045"/>
</dbReference>
<dbReference type="BRENDA" id="1.3.1.21">
    <property type="organism ID" value="1045"/>
</dbReference>
<dbReference type="UniPathway" id="UPA01020"/>
<dbReference type="PRO" id="PR:Q17938"/>
<dbReference type="Proteomes" id="UP000001940">
    <property type="component" value="Chromosome V"/>
</dbReference>
<dbReference type="Bgee" id="WBGene00007536">
    <property type="expression patterns" value="Expressed in adult organism and 3 other cell types or tissues"/>
</dbReference>
<dbReference type="GO" id="GO:0005737">
    <property type="term" value="C:cytoplasm"/>
    <property type="evidence" value="ECO:0000314"/>
    <property type="project" value="WormBase"/>
</dbReference>
<dbReference type="GO" id="GO:0016020">
    <property type="term" value="C:membrane"/>
    <property type="evidence" value="ECO:0007669"/>
    <property type="project" value="UniProtKB-SubCell"/>
</dbReference>
<dbReference type="GO" id="GO:0051537">
    <property type="term" value="F:2 iron, 2 sulfur cluster binding"/>
    <property type="evidence" value="ECO:0007669"/>
    <property type="project" value="UniProtKB-KW"/>
</dbReference>
<dbReference type="GO" id="GO:0170056">
    <property type="term" value="F:cholesterol 7-desaturase (NAD(P)H) activity"/>
    <property type="evidence" value="ECO:0007669"/>
    <property type="project" value="UniProtKB-EC"/>
</dbReference>
<dbReference type="GO" id="GO:0046872">
    <property type="term" value="F:metal ion binding"/>
    <property type="evidence" value="ECO:0007669"/>
    <property type="project" value="UniProtKB-KW"/>
</dbReference>
<dbReference type="GO" id="GO:0016491">
    <property type="term" value="F:oxidoreductase activity"/>
    <property type="evidence" value="ECO:0000318"/>
    <property type="project" value="GO_Central"/>
</dbReference>
<dbReference type="GO" id="GO:0008203">
    <property type="term" value="P:cholesterol metabolic process"/>
    <property type="evidence" value="ECO:0007669"/>
    <property type="project" value="UniProtKB-KW"/>
</dbReference>
<dbReference type="CDD" id="cd03469">
    <property type="entry name" value="Rieske_RO_Alpha_N"/>
    <property type="match status" value="1"/>
</dbReference>
<dbReference type="FunFam" id="3.90.380.10:FF:000011">
    <property type="entry name" value="Cholesterol 7-desaturase"/>
    <property type="match status" value="1"/>
</dbReference>
<dbReference type="Gene3D" id="3.90.380.10">
    <property type="entry name" value="Naphthalene 1,2-dioxygenase Alpha Subunit, Chain A, domain 1"/>
    <property type="match status" value="1"/>
</dbReference>
<dbReference type="Gene3D" id="2.102.10.10">
    <property type="entry name" value="Rieske [2Fe-2S] iron-sulphur domain"/>
    <property type="match status" value="1"/>
</dbReference>
<dbReference type="InterPro" id="IPR050584">
    <property type="entry name" value="Cholesterol_7-desaturase"/>
</dbReference>
<dbReference type="InterPro" id="IPR045605">
    <property type="entry name" value="KshA-like_C"/>
</dbReference>
<dbReference type="InterPro" id="IPR017941">
    <property type="entry name" value="Rieske_2Fe-2S"/>
</dbReference>
<dbReference type="InterPro" id="IPR036922">
    <property type="entry name" value="Rieske_2Fe-2S_sf"/>
</dbReference>
<dbReference type="PANTHER" id="PTHR21266:SF32">
    <property type="entry name" value="CHOLESTEROL 7-DESATURASE NVD"/>
    <property type="match status" value="1"/>
</dbReference>
<dbReference type="PANTHER" id="PTHR21266">
    <property type="entry name" value="IRON-SULFUR DOMAIN CONTAINING PROTEIN"/>
    <property type="match status" value="1"/>
</dbReference>
<dbReference type="Pfam" id="PF19298">
    <property type="entry name" value="KshA_C"/>
    <property type="match status" value="1"/>
</dbReference>
<dbReference type="Pfam" id="PF00355">
    <property type="entry name" value="Rieske"/>
    <property type="match status" value="1"/>
</dbReference>
<dbReference type="SUPFAM" id="SSF55961">
    <property type="entry name" value="Bet v1-like"/>
    <property type="match status" value="1"/>
</dbReference>
<dbReference type="SUPFAM" id="SSF50022">
    <property type="entry name" value="ISP domain"/>
    <property type="match status" value="1"/>
</dbReference>
<dbReference type="PROSITE" id="PS51296">
    <property type="entry name" value="RIESKE"/>
    <property type="match status" value="1"/>
</dbReference>
<comment type="function">
    <text evidence="3 4 5">Catalyzes the production of 7-dehydrocholesterol (7-DHC or cholesta-5,7-dien-3beta-ol) by inserting a double bond (desaturating) at the C7-C8 single bond of cholesterol. This reaction is the first step in the synthesis of the steroid hormone Delta(7)-dafachronic acid (one of the principal steroid hormones in nematodes). Dafachronic acids bind directly to the nuclear hormone receptor (NHR) daf-12, suppressing dauer formation and inducing reproductive growth.</text>
</comment>
<comment type="catalytic activity">
    <reaction evidence="3 4 5">
        <text>cholesterol + NADPH + O2 + H(+) = 7-dehydrocholesterol + NADP(+) + 2 H2O</text>
        <dbReference type="Rhea" id="RHEA:45024"/>
        <dbReference type="ChEBI" id="CHEBI:15377"/>
        <dbReference type="ChEBI" id="CHEBI:15378"/>
        <dbReference type="ChEBI" id="CHEBI:15379"/>
        <dbReference type="ChEBI" id="CHEBI:16113"/>
        <dbReference type="ChEBI" id="CHEBI:17759"/>
        <dbReference type="ChEBI" id="CHEBI:57783"/>
        <dbReference type="ChEBI" id="CHEBI:58349"/>
        <dbReference type="EC" id="1.14.19.21"/>
    </reaction>
    <physiologicalReaction direction="left-to-right" evidence="3 5 9">
        <dbReference type="Rhea" id="RHEA:45025"/>
    </physiologicalReaction>
</comment>
<comment type="catalytic activity">
    <reaction evidence="3 4 5">
        <text>cholesterol + NADH + O2 + H(+) = 7-dehydrocholesterol + NAD(+) + 2 H2O</text>
        <dbReference type="Rhea" id="RHEA:51644"/>
        <dbReference type="ChEBI" id="CHEBI:15377"/>
        <dbReference type="ChEBI" id="CHEBI:15378"/>
        <dbReference type="ChEBI" id="CHEBI:15379"/>
        <dbReference type="ChEBI" id="CHEBI:16113"/>
        <dbReference type="ChEBI" id="CHEBI:17759"/>
        <dbReference type="ChEBI" id="CHEBI:57540"/>
        <dbReference type="ChEBI" id="CHEBI:57945"/>
        <dbReference type="EC" id="1.14.19.21"/>
    </reaction>
    <physiologicalReaction direction="left-to-right" evidence="3 5 9">
        <dbReference type="Rhea" id="RHEA:51645"/>
    </physiologicalReaction>
</comment>
<comment type="cofactor">
    <cofactor evidence="2">
        <name>[2Fe-2S] cluster</name>
        <dbReference type="ChEBI" id="CHEBI:190135"/>
    </cofactor>
    <text evidence="2">Binds 1 [2Fe-2S] cluster per subunit.</text>
</comment>
<comment type="pathway">
    <text evidence="3 5 9">Steroid hormone biosynthesis; dafachronic acid biosynthesis.</text>
</comment>
<comment type="subcellular location">
    <subcellularLocation>
        <location evidence="8">Membrane</location>
        <topology evidence="8">Single-pass membrane protein</topology>
    </subcellularLocation>
</comment>
<comment type="tissue specificity">
    <text evidence="3">Expressed in intestine at all postembryonic stages, including dauer. Expression is reduced in daf-2 mutants.</text>
</comment>
<comment type="similarity">
    <text evidence="8">Belongs to the cholesterol 7-desaturase family.</text>
</comment>
<evidence type="ECO:0000255" key="1"/>
<evidence type="ECO:0000255" key="2">
    <source>
        <dbReference type="PROSITE-ProRule" id="PRU00628"/>
    </source>
</evidence>
<evidence type="ECO:0000269" key="3">
    <source>
    </source>
</evidence>
<evidence type="ECO:0000269" key="4">
    <source>
    </source>
</evidence>
<evidence type="ECO:0000269" key="5">
    <source>
    </source>
</evidence>
<evidence type="ECO:0000303" key="6">
    <source>
    </source>
</evidence>
<evidence type="ECO:0000303" key="7">
    <source>
    </source>
</evidence>
<evidence type="ECO:0000305" key="8"/>
<evidence type="ECO:0000305" key="9">
    <source>
    </source>
</evidence>
<sequence>MLLEQIWGFLTAHPISVVTTILIVYLIHITLKPLNRVRRLGDVGLFFGKPELKGFYRERQLERLKLLRRVGDMPPVFPNGWYCVCESEKLANNQIMEITVLGQFLSLIRSESGAVYITDSYCPHIGANFNIGGRVVRDNCIQCPFHGWIFSAETGKCVEVPYDEGRIPEQAKVTTWPCIERNNNIYLWYHCDGAEPEWEIPEITEITDGFWHLGGRTEHEVMCHIQEIPENGADIAHLNYLHKSAPPVTKGSDIIKTDLSDPQPAVQHVWDGKWEVKSEEDRHCGVMHLNQFMTFWGYKVPLTSSKLVAEQHGPGIVHMLFDFGIWGKGVVFQTVTPEEALLQRVRFRIFSNIPWFFVKFFMTVEAMQFERDVFIWSNKKYIKSPLLVKNDGPIQKHRRWFSQFYTENSPKMLKDGSLSNQAKSIFDW</sequence>
<organism>
    <name type="scientific">Caenorhabditis elegans</name>
    <dbReference type="NCBI Taxonomy" id="6239"/>
    <lineage>
        <taxon>Eukaryota</taxon>
        <taxon>Metazoa</taxon>
        <taxon>Ecdysozoa</taxon>
        <taxon>Nematoda</taxon>
        <taxon>Chromadorea</taxon>
        <taxon>Rhabditida</taxon>
        <taxon>Rhabditina</taxon>
        <taxon>Rhabditomorpha</taxon>
        <taxon>Rhabditoidea</taxon>
        <taxon>Rhabditidae</taxon>
        <taxon>Peloderinae</taxon>
        <taxon>Caenorhabditis</taxon>
    </lineage>
</organism>